<protein>
    <recommendedName>
        <fullName evidence="1">Ribosomal RNA small subunit methyltransferase A</fullName>
        <ecNumber evidence="1">2.1.1.182</ecNumber>
    </recommendedName>
    <alternativeName>
        <fullName evidence="1">16S rRNA (adenine(1518)-N(6)/adenine(1519)-N(6))-dimethyltransferase</fullName>
    </alternativeName>
    <alternativeName>
        <fullName evidence="1">16S rRNA dimethyladenosine transferase</fullName>
    </alternativeName>
    <alternativeName>
        <fullName evidence="1">16S rRNA dimethylase</fullName>
    </alternativeName>
    <alternativeName>
        <fullName evidence="1">S-adenosylmethionine-6-N', N'-adenosyl(rRNA) dimethyltransferase</fullName>
    </alternativeName>
</protein>
<dbReference type="EC" id="2.1.1.182" evidence="1"/>
<dbReference type="EMBL" id="CP000962">
    <property type="protein sequence ID" value="ACA56864.1"/>
    <property type="molecule type" value="Genomic_DNA"/>
</dbReference>
<dbReference type="RefSeq" id="WP_012344674.1">
    <property type="nucleotide sequence ID" value="NC_010520.1"/>
</dbReference>
<dbReference type="SMR" id="B1KRY8"/>
<dbReference type="KEGG" id="cbl:CLK_3256"/>
<dbReference type="HOGENOM" id="CLU_041220_0_0_9"/>
<dbReference type="GO" id="GO:0005829">
    <property type="term" value="C:cytosol"/>
    <property type="evidence" value="ECO:0007669"/>
    <property type="project" value="TreeGrafter"/>
</dbReference>
<dbReference type="GO" id="GO:0052908">
    <property type="term" value="F:16S rRNA (adenine(1518)-N(6)/adenine(1519)-N(6))-dimethyltransferase activity"/>
    <property type="evidence" value="ECO:0007669"/>
    <property type="project" value="UniProtKB-EC"/>
</dbReference>
<dbReference type="GO" id="GO:0003723">
    <property type="term" value="F:RNA binding"/>
    <property type="evidence" value="ECO:0007669"/>
    <property type="project" value="UniProtKB-KW"/>
</dbReference>
<dbReference type="CDD" id="cd02440">
    <property type="entry name" value="AdoMet_MTases"/>
    <property type="match status" value="1"/>
</dbReference>
<dbReference type="FunFam" id="1.10.8.100:FF:000001">
    <property type="entry name" value="Ribosomal RNA small subunit methyltransferase A"/>
    <property type="match status" value="1"/>
</dbReference>
<dbReference type="FunFam" id="3.40.50.150:FF:000023">
    <property type="entry name" value="Ribosomal RNA small subunit methyltransferase A"/>
    <property type="match status" value="1"/>
</dbReference>
<dbReference type="Gene3D" id="1.10.8.100">
    <property type="entry name" value="Ribosomal RNA adenine dimethylase-like, domain 2"/>
    <property type="match status" value="1"/>
</dbReference>
<dbReference type="Gene3D" id="3.40.50.150">
    <property type="entry name" value="Vaccinia Virus protein VP39"/>
    <property type="match status" value="1"/>
</dbReference>
<dbReference type="HAMAP" id="MF_00607">
    <property type="entry name" value="16SrRNA_methyltr_A"/>
    <property type="match status" value="1"/>
</dbReference>
<dbReference type="InterPro" id="IPR001737">
    <property type="entry name" value="KsgA/Erm"/>
</dbReference>
<dbReference type="InterPro" id="IPR023165">
    <property type="entry name" value="rRNA_Ade_diMease-like_C"/>
</dbReference>
<dbReference type="InterPro" id="IPR020596">
    <property type="entry name" value="rRNA_Ade_Mease_Trfase_CS"/>
</dbReference>
<dbReference type="InterPro" id="IPR020598">
    <property type="entry name" value="rRNA_Ade_methylase_Trfase_N"/>
</dbReference>
<dbReference type="InterPro" id="IPR011530">
    <property type="entry name" value="rRNA_adenine_dimethylase"/>
</dbReference>
<dbReference type="InterPro" id="IPR029063">
    <property type="entry name" value="SAM-dependent_MTases_sf"/>
</dbReference>
<dbReference type="NCBIfam" id="TIGR00755">
    <property type="entry name" value="ksgA"/>
    <property type="match status" value="1"/>
</dbReference>
<dbReference type="PANTHER" id="PTHR11727">
    <property type="entry name" value="DIMETHYLADENOSINE TRANSFERASE"/>
    <property type="match status" value="1"/>
</dbReference>
<dbReference type="PANTHER" id="PTHR11727:SF7">
    <property type="entry name" value="DIMETHYLADENOSINE TRANSFERASE-RELATED"/>
    <property type="match status" value="1"/>
</dbReference>
<dbReference type="Pfam" id="PF00398">
    <property type="entry name" value="RrnaAD"/>
    <property type="match status" value="1"/>
</dbReference>
<dbReference type="SMART" id="SM00650">
    <property type="entry name" value="rADc"/>
    <property type="match status" value="1"/>
</dbReference>
<dbReference type="SUPFAM" id="SSF53335">
    <property type="entry name" value="S-adenosyl-L-methionine-dependent methyltransferases"/>
    <property type="match status" value="1"/>
</dbReference>
<dbReference type="PROSITE" id="PS01131">
    <property type="entry name" value="RRNA_A_DIMETH"/>
    <property type="match status" value="1"/>
</dbReference>
<dbReference type="PROSITE" id="PS51689">
    <property type="entry name" value="SAM_RNA_A_N6_MT"/>
    <property type="match status" value="1"/>
</dbReference>
<gene>
    <name evidence="1" type="primary">rsmA</name>
    <name evidence="1" type="synonym">ksgA</name>
    <name type="ordered locus">CLK_3256</name>
</gene>
<reference key="1">
    <citation type="journal article" date="2007" name="PLoS ONE">
        <title>Analysis of the neurotoxin complex genes in Clostridium botulinum A1-A4 and B1 strains: BoNT/A3, /Ba4 and /B1 clusters are located within plasmids.</title>
        <authorList>
            <person name="Smith T.J."/>
            <person name="Hill K.K."/>
            <person name="Foley B.T."/>
            <person name="Detter J.C."/>
            <person name="Munk A.C."/>
            <person name="Bruce D.C."/>
            <person name="Doggett N.A."/>
            <person name="Smith L.A."/>
            <person name="Marks J.D."/>
            <person name="Xie G."/>
            <person name="Brettin T.S."/>
        </authorList>
    </citation>
    <scope>NUCLEOTIDE SEQUENCE [LARGE SCALE GENOMIC DNA]</scope>
    <source>
        <strain>Loch Maree / Type A3</strain>
    </source>
</reference>
<proteinExistence type="inferred from homology"/>
<keyword id="KW-0963">Cytoplasm</keyword>
<keyword id="KW-0489">Methyltransferase</keyword>
<keyword id="KW-0694">RNA-binding</keyword>
<keyword id="KW-0698">rRNA processing</keyword>
<keyword id="KW-0949">S-adenosyl-L-methionine</keyword>
<keyword id="KW-0808">Transferase</keyword>
<accession>B1KRY8</accession>
<sequence length="275" mass="31745">MNTKEIVNKYEFKFNKNLGQNFLVDESVLEDIIKGAEISKEDTVIEIGPGVGTLTKELLERAKEVYSIELDGDLIPILQEELKEYNNFTLIHKDALKIDFNGLMENKDSIKLVANLPYYVTTPIISRLLKEKCDFKSLTIMIQKEVAERIDAEPNCKEYGSLTVLVQYYCNTEIIRKVSPNCFIPRPKVDSIVIKLDRLSEPRVRVKSEKLFFNVVRSSFNMRRKTLWNSLKSLNIDKESMENAFERAGIDPKRRGETLSIEEFGKLSDCIYDIL</sequence>
<feature type="chain" id="PRO_1000212242" description="Ribosomal RNA small subunit methyltransferase A">
    <location>
        <begin position="1"/>
        <end position="275"/>
    </location>
</feature>
<feature type="binding site" evidence="1">
    <location>
        <position position="21"/>
    </location>
    <ligand>
        <name>S-adenosyl-L-methionine</name>
        <dbReference type="ChEBI" id="CHEBI:59789"/>
    </ligand>
</feature>
<feature type="binding site" evidence="1">
    <location>
        <position position="23"/>
    </location>
    <ligand>
        <name>S-adenosyl-L-methionine</name>
        <dbReference type="ChEBI" id="CHEBI:59789"/>
    </ligand>
</feature>
<feature type="binding site" evidence="1">
    <location>
        <position position="48"/>
    </location>
    <ligand>
        <name>S-adenosyl-L-methionine</name>
        <dbReference type="ChEBI" id="CHEBI:59789"/>
    </ligand>
</feature>
<feature type="binding site" evidence="1">
    <location>
        <position position="69"/>
    </location>
    <ligand>
        <name>S-adenosyl-L-methionine</name>
        <dbReference type="ChEBI" id="CHEBI:59789"/>
    </ligand>
</feature>
<feature type="binding site" evidence="1">
    <location>
        <position position="94"/>
    </location>
    <ligand>
        <name>S-adenosyl-L-methionine</name>
        <dbReference type="ChEBI" id="CHEBI:59789"/>
    </ligand>
</feature>
<feature type="binding site" evidence="1">
    <location>
        <position position="115"/>
    </location>
    <ligand>
        <name>S-adenosyl-L-methionine</name>
        <dbReference type="ChEBI" id="CHEBI:59789"/>
    </ligand>
</feature>
<evidence type="ECO:0000255" key="1">
    <source>
        <dbReference type="HAMAP-Rule" id="MF_00607"/>
    </source>
</evidence>
<comment type="function">
    <text evidence="1">Specifically dimethylates two adjacent adenosines (A1518 and A1519) in the loop of a conserved hairpin near the 3'-end of 16S rRNA in the 30S particle. May play a critical role in biogenesis of 30S subunits.</text>
</comment>
<comment type="catalytic activity">
    <reaction evidence="1">
        <text>adenosine(1518)/adenosine(1519) in 16S rRNA + 4 S-adenosyl-L-methionine = N(6)-dimethyladenosine(1518)/N(6)-dimethyladenosine(1519) in 16S rRNA + 4 S-adenosyl-L-homocysteine + 4 H(+)</text>
        <dbReference type="Rhea" id="RHEA:19609"/>
        <dbReference type="Rhea" id="RHEA-COMP:10232"/>
        <dbReference type="Rhea" id="RHEA-COMP:10233"/>
        <dbReference type="ChEBI" id="CHEBI:15378"/>
        <dbReference type="ChEBI" id="CHEBI:57856"/>
        <dbReference type="ChEBI" id="CHEBI:59789"/>
        <dbReference type="ChEBI" id="CHEBI:74411"/>
        <dbReference type="ChEBI" id="CHEBI:74493"/>
        <dbReference type="EC" id="2.1.1.182"/>
    </reaction>
</comment>
<comment type="subcellular location">
    <subcellularLocation>
        <location evidence="1">Cytoplasm</location>
    </subcellularLocation>
</comment>
<comment type="similarity">
    <text evidence="1">Belongs to the class I-like SAM-binding methyltransferase superfamily. rRNA adenine N(6)-methyltransferase family. RsmA subfamily.</text>
</comment>
<name>RSMA_CLOBM</name>
<organism>
    <name type="scientific">Clostridium botulinum (strain Loch Maree / Type A3)</name>
    <dbReference type="NCBI Taxonomy" id="498214"/>
    <lineage>
        <taxon>Bacteria</taxon>
        <taxon>Bacillati</taxon>
        <taxon>Bacillota</taxon>
        <taxon>Clostridia</taxon>
        <taxon>Eubacteriales</taxon>
        <taxon>Clostridiaceae</taxon>
        <taxon>Clostridium</taxon>
    </lineage>
</organism>